<name>GLPF_THEMA</name>
<comment type="function">
    <text evidence="1">Mediates glycerol diffusion across the cytoplasmic membrane via a pore-type mechanism.</text>
</comment>
<comment type="catalytic activity">
    <reaction evidence="1">
        <text>glycerol(in) = glycerol(out)</text>
        <dbReference type="Rhea" id="RHEA:29675"/>
        <dbReference type="ChEBI" id="CHEBI:17754"/>
    </reaction>
</comment>
<comment type="subcellular location">
    <subcellularLocation>
        <location evidence="3">Cell membrane</location>
        <topology evidence="2">Multi-pass membrane protein</topology>
    </subcellularLocation>
</comment>
<comment type="domain">
    <text evidence="3">Aquaporins contain two tandem repeats each containing three membrane-spanning domains and a pore-forming loop with the signature motif Asn-Pro-Ala (NPA).</text>
</comment>
<comment type="similarity">
    <text evidence="3">Belongs to the MIP/aquaporin (TC 1.A.8) family.</text>
</comment>
<sequence>MSVYLAEFLGTMLLIILGDGVVANVVLKKSKGHNSGWIVITTGWGLAVAMSVYLVGRISGAHINPAVTIGLAFIGQFPWSKVPGYIFSQILGAFVGAILVYLTYLPHWKETDDPDAKLAVFCTGPAVRKYGANLLTEIIGTMVLLMGVLGIGANKLADGLNPLLVGFLVWSIGLSLGGPTGYAINPARDFGPRLAHAILPIPGKRDSDWSYSWVPIIGPIIGGILGASLYNWLF</sequence>
<feature type="chain" id="PRO_0000064092" description="Probable glycerol uptake facilitator protein">
    <location>
        <begin position="1"/>
        <end position="234"/>
    </location>
</feature>
<feature type="transmembrane region" description="Helical" evidence="2">
    <location>
        <begin position="3"/>
        <end position="23"/>
    </location>
</feature>
<feature type="transmembrane region" description="Helical" evidence="2">
    <location>
        <begin position="36"/>
        <end position="56"/>
    </location>
</feature>
<feature type="transmembrane region" description="Helical" evidence="2">
    <location>
        <begin position="82"/>
        <end position="102"/>
    </location>
</feature>
<feature type="transmembrane region" description="Helical" evidence="2">
    <location>
        <begin position="134"/>
        <end position="154"/>
    </location>
</feature>
<feature type="transmembrane region" description="Helical" evidence="2">
    <location>
        <begin position="164"/>
        <end position="184"/>
    </location>
</feature>
<feature type="transmembrane region" description="Helical" evidence="2">
    <location>
        <begin position="214"/>
        <end position="234"/>
    </location>
</feature>
<feature type="short sequence motif" description="NPA 1" evidence="3">
    <location>
        <begin position="64"/>
        <end position="66"/>
    </location>
</feature>
<feature type="short sequence motif" description="NPA 2" evidence="3">
    <location>
        <begin position="185"/>
        <end position="187"/>
    </location>
</feature>
<organism>
    <name type="scientific">Thermotoga maritima (strain ATCC 43589 / DSM 3109 / JCM 10099 / NBRC 100826 / MSB8)</name>
    <dbReference type="NCBI Taxonomy" id="243274"/>
    <lineage>
        <taxon>Bacteria</taxon>
        <taxon>Thermotogati</taxon>
        <taxon>Thermotogota</taxon>
        <taxon>Thermotogae</taxon>
        <taxon>Thermotogales</taxon>
        <taxon>Thermotogaceae</taxon>
        <taxon>Thermotoga</taxon>
    </lineage>
</organism>
<protein>
    <recommendedName>
        <fullName evidence="1">Probable glycerol uptake facilitator protein</fullName>
    </recommendedName>
</protein>
<evidence type="ECO:0000250" key="1">
    <source>
        <dbReference type="UniProtKB" id="P0AER0"/>
    </source>
</evidence>
<evidence type="ECO:0000255" key="2"/>
<evidence type="ECO:0000305" key="3"/>
<keyword id="KW-1003">Cell membrane</keyword>
<keyword id="KW-0472">Membrane</keyword>
<keyword id="KW-1185">Reference proteome</keyword>
<keyword id="KW-0677">Repeat</keyword>
<keyword id="KW-0812">Transmembrane</keyword>
<keyword id="KW-1133">Transmembrane helix</keyword>
<keyword id="KW-0813">Transport</keyword>
<reference key="1">
    <citation type="journal article" date="1999" name="Nature">
        <title>Evidence for lateral gene transfer between Archaea and Bacteria from genome sequence of Thermotoga maritima.</title>
        <authorList>
            <person name="Nelson K.E."/>
            <person name="Clayton R.A."/>
            <person name="Gill S.R."/>
            <person name="Gwinn M.L."/>
            <person name="Dodson R.J."/>
            <person name="Haft D.H."/>
            <person name="Hickey E.K."/>
            <person name="Peterson J.D."/>
            <person name="Nelson W.C."/>
            <person name="Ketchum K.A."/>
            <person name="McDonald L.A."/>
            <person name="Utterback T.R."/>
            <person name="Malek J.A."/>
            <person name="Linher K.D."/>
            <person name="Garrett M.M."/>
            <person name="Stewart A.M."/>
            <person name="Cotton M.D."/>
            <person name="Pratt M.S."/>
            <person name="Phillips C.A."/>
            <person name="Richardson D.L."/>
            <person name="Heidelberg J.F."/>
            <person name="Sutton G.G."/>
            <person name="Fleischmann R.D."/>
            <person name="Eisen J.A."/>
            <person name="White O."/>
            <person name="Salzberg S.L."/>
            <person name="Smith H.O."/>
            <person name="Venter J.C."/>
            <person name="Fraser C.M."/>
        </authorList>
    </citation>
    <scope>NUCLEOTIDE SEQUENCE [LARGE SCALE GENOMIC DNA]</scope>
    <source>
        <strain>ATCC 43589 / DSM 3109 / JCM 10099 / NBRC 100826 / MSB8</strain>
    </source>
</reference>
<proteinExistence type="inferred from homology"/>
<dbReference type="EMBL" id="AE000512">
    <property type="protein sequence ID" value="AAD36499.1"/>
    <property type="molecule type" value="Genomic_DNA"/>
</dbReference>
<dbReference type="PIR" id="B72254">
    <property type="entry name" value="B72254"/>
</dbReference>
<dbReference type="RefSeq" id="NP_229229.1">
    <property type="nucleotide sequence ID" value="NC_000853.1"/>
</dbReference>
<dbReference type="RefSeq" id="WP_004081684.1">
    <property type="nucleotide sequence ID" value="NC_000853.1"/>
</dbReference>
<dbReference type="SMR" id="Q9X1E3"/>
<dbReference type="FunCoup" id="Q9X1E3">
    <property type="interactions" value="94"/>
</dbReference>
<dbReference type="STRING" id="243274.TM_1429"/>
<dbReference type="PaxDb" id="243274-THEMA_07170"/>
<dbReference type="EnsemblBacteria" id="AAD36499">
    <property type="protein sequence ID" value="AAD36499"/>
    <property type="gene ID" value="TM_1429"/>
</dbReference>
<dbReference type="KEGG" id="tma:TM1429"/>
<dbReference type="KEGG" id="tmi:THEMA_07170"/>
<dbReference type="KEGG" id="tmm:Tmari_1435"/>
<dbReference type="KEGG" id="tmw:THMA_1459"/>
<dbReference type="eggNOG" id="COG0580">
    <property type="taxonomic scope" value="Bacteria"/>
</dbReference>
<dbReference type="InParanoid" id="Q9X1E3"/>
<dbReference type="OrthoDB" id="9807293at2"/>
<dbReference type="Proteomes" id="UP000008183">
    <property type="component" value="Chromosome"/>
</dbReference>
<dbReference type="GO" id="GO:0005886">
    <property type="term" value="C:plasma membrane"/>
    <property type="evidence" value="ECO:0000318"/>
    <property type="project" value="GO_Central"/>
</dbReference>
<dbReference type="GO" id="GO:0015254">
    <property type="term" value="F:glycerol channel activity"/>
    <property type="evidence" value="ECO:0000318"/>
    <property type="project" value="GO_Central"/>
</dbReference>
<dbReference type="GO" id="GO:0015793">
    <property type="term" value="P:glycerol transmembrane transport"/>
    <property type="evidence" value="ECO:0000318"/>
    <property type="project" value="GO_Central"/>
</dbReference>
<dbReference type="Gene3D" id="1.20.1080.10">
    <property type="entry name" value="Glycerol uptake facilitator protein"/>
    <property type="match status" value="1"/>
</dbReference>
<dbReference type="InterPro" id="IPR023271">
    <property type="entry name" value="Aquaporin-like"/>
</dbReference>
<dbReference type="InterPro" id="IPR000425">
    <property type="entry name" value="MIP"/>
</dbReference>
<dbReference type="InterPro" id="IPR050363">
    <property type="entry name" value="MIP/Aquaporin"/>
</dbReference>
<dbReference type="InterPro" id="IPR022357">
    <property type="entry name" value="MIP_CS"/>
</dbReference>
<dbReference type="NCBIfam" id="TIGR00861">
    <property type="entry name" value="MIP"/>
    <property type="match status" value="1"/>
</dbReference>
<dbReference type="PANTHER" id="PTHR43829">
    <property type="entry name" value="AQUAPORIN OR AQUAGLYCEROPORIN RELATED"/>
    <property type="match status" value="1"/>
</dbReference>
<dbReference type="PANTHER" id="PTHR43829:SF9">
    <property type="entry name" value="AQUAPORIN-9"/>
    <property type="match status" value="1"/>
</dbReference>
<dbReference type="Pfam" id="PF00230">
    <property type="entry name" value="MIP"/>
    <property type="match status" value="1"/>
</dbReference>
<dbReference type="PRINTS" id="PR00783">
    <property type="entry name" value="MINTRINSICP"/>
</dbReference>
<dbReference type="SUPFAM" id="SSF81338">
    <property type="entry name" value="Aquaporin-like"/>
    <property type="match status" value="1"/>
</dbReference>
<dbReference type="PROSITE" id="PS00221">
    <property type="entry name" value="MIP"/>
    <property type="match status" value="1"/>
</dbReference>
<accession>Q9X1E3</accession>
<gene>
    <name type="primary">glpF</name>
    <name type="ordered locus">TM_1429</name>
</gene>